<keyword id="KW-1003">Cell membrane</keyword>
<keyword id="KW-1015">Disulfide bond</keyword>
<keyword id="KW-0297">G-protein coupled receptor</keyword>
<keyword id="KW-0325">Glycoprotein</keyword>
<keyword id="KW-0449">Lipoprotein</keyword>
<keyword id="KW-0472">Membrane</keyword>
<keyword id="KW-0564">Palmitate</keyword>
<keyword id="KW-0597">Phosphoprotein</keyword>
<keyword id="KW-0675">Receptor</keyword>
<keyword id="KW-0765">Sulfation</keyword>
<keyword id="KW-0807">Transducer</keyword>
<keyword id="KW-0812">Transmembrane</keyword>
<keyword id="KW-1133">Transmembrane helix</keyword>
<comment type="function">
    <text evidence="1">Receptor for a number of inflammatory CC-chemokines including CCL3/MIP-1-alpha, CCL4/MIP-1-beta and RANTES and subsequently transduces a signal by increasing the intracellular calcium ion level. May play a role in the control of granulocytic lineage proliferation or differentiation. Participates in T-lymphocyte migration to the infection site by acting as a chemotactic receptor.</text>
</comment>
<comment type="subunit">
    <text evidence="1">Interacts with PRAF2. Efficient ligand binding to CCL3/MIP-1alpha and CCL4/MIP-1beta requires sulfation, O-glycosylation and sialic acid modifications. Glycosylation on Ser-6 is required for efficient binding of CCL4. Interacts with GRK2. Interacts with ARRB1 and ARRB2. Interacts with CNIH4. Interacts with S100A4; this interaction stimulates T-lymphocyte chemotaxis.</text>
</comment>
<comment type="subcellular location">
    <subcellularLocation>
        <location evidence="2">Cell membrane</location>
        <topology evidence="2">Multi-pass membrane protein</topology>
    </subcellularLocation>
</comment>
<comment type="PTM">
    <text evidence="1">Sulfated on at least 2 of the N-terminal tyrosines. Sulfation is required for efficient binding of the chemokines, CCL3 and CCL4 (By similarity).</text>
</comment>
<comment type="PTM">
    <text evidence="1">Palmitoylation in the C-terminal is important for cell surface expression.</text>
</comment>
<comment type="PTM">
    <text evidence="1">Phosphorylation on serine residues in the C-terminal is stimulated by binding CC chemokines especially by APO-RANTES.</text>
</comment>
<comment type="PTM">
    <text evidence="1">O-glycosylated, but not N-glycosylated. Ser-6 appears to be the major site even if Ser-7 may be also O-glycosylated. Also sialylated glycans present which contribute to chemokine binding. Ser-17 may also be glycosylated and, if so, with small moieties such as a T-antigen.</text>
</comment>
<comment type="similarity">
    <text evidence="4">Belongs to the G-protein coupled receptor 1 family.</text>
</comment>
<protein>
    <recommendedName>
        <fullName>C-C chemokine receptor type 5</fullName>
        <shortName>C-C CKR-5</shortName>
        <shortName>CC-CKR-5</shortName>
        <shortName>CCR-5</shortName>
        <shortName>CCR5</shortName>
    </recommendedName>
    <cdAntigenName>CD195</cdAntigenName>
</protein>
<accession>Q95NC2</accession>
<proteinExistence type="inferred from homology"/>
<sequence>MDYEVSSPIYDIDYGASEPCQKIDVKQMGAQLLPPLYSMVFLFGFVGNMLVVLILINCKRLKSMTDIYLLNLAISDLFFLFTVPFWAHYAAGQWDFGNTMCQFLTGLYFIGFFSGIFFIILLTIDRYLAIVHAVFALKARTVTFGVVTSVITWVVAVFASLPGIIFTRSQKEGYHYTCSPHFPFGQYRFWKNLETLKMVILGLVLPLLVMVICYSGILKTLLRCRNEKKRHRAVRLIFTIMIVYFLFWAPYNIVLLLNTYQEFFGLNNCSSSNRLDQAMQVTETLGMTHCCVNPIIYAFVGEKFRNYLLVFFQKHIAKRFCKCCSIFQKEAPERANSVYTRSTGEQEISVGL</sequence>
<reference key="1">
    <citation type="journal article" date="1999" name="Mol. Biol. Evol.">
        <title>Sequence evolution of the CCR5 chemokine receptor gene in primates.</title>
        <authorList>
            <person name="Zhang Y.-W."/>
            <person name="Ryder O.A."/>
            <person name="Zhang Y.-P."/>
        </authorList>
    </citation>
    <scope>NUCLEOTIDE SEQUENCE [GENOMIC DNA]</scope>
</reference>
<evidence type="ECO:0000250" key="1">
    <source>
        <dbReference type="UniProtKB" id="P51681"/>
    </source>
</evidence>
<evidence type="ECO:0000250" key="2">
    <source>
        <dbReference type="UniProtKB" id="Q9XT76"/>
    </source>
</evidence>
<evidence type="ECO:0000255" key="3"/>
<evidence type="ECO:0000255" key="4">
    <source>
        <dbReference type="PROSITE-ProRule" id="PRU00521"/>
    </source>
</evidence>
<feature type="chain" id="PRO_0000069249" description="C-C chemokine receptor type 5">
    <location>
        <begin position="1"/>
        <end position="352"/>
    </location>
</feature>
<feature type="topological domain" description="Extracellular" evidence="3">
    <location>
        <begin position="1"/>
        <end position="30"/>
    </location>
</feature>
<feature type="transmembrane region" description="Helical; Name=1" evidence="3">
    <location>
        <begin position="31"/>
        <end position="58"/>
    </location>
</feature>
<feature type="topological domain" description="Cytoplasmic" evidence="3">
    <location>
        <begin position="59"/>
        <end position="68"/>
    </location>
</feature>
<feature type="transmembrane region" description="Helical; Name=2" evidence="3">
    <location>
        <begin position="69"/>
        <end position="89"/>
    </location>
</feature>
<feature type="topological domain" description="Extracellular" evidence="3">
    <location>
        <begin position="90"/>
        <end position="102"/>
    </location>
</feature>
<feature type="transmembrane region" description="Helical; Name=3" evidence="3">
    <location>
        <begin position="103"/>
        <end position="124"/>
    </location>
</feature>
<feature type="topological domain" description="Cytoplasmic" evidence="3">
    <location>
        <begin position="125"/>
        <end position="141"/>
    </location>
</feature>
<feature type="transmembrane region" description="Helical; Name=4" evidence="3">
    <location>
        <begin position="142"/>
        <end position="166"/>
    </location>
</feature>
<feature type="topological domain" description="Extracellular" evidence="3">
    <location>
        <begin position="167"/>
        <end position="198"/>
    </location>
</feature>
<feature type="transmembrane region" description="Helical; Name=5" evidence="3">
    <location>
        <begin position="199"/>
        <end position="218"/>
    </location>
</feature>
<feature type="topological domain" description="Cytoplasmic" evidence="3">
    <location>
        <begin position="219"/>
        <end position="235"/>
    </location>
</feature>
<feature type="transmembrane region" description="Helical; Name=6" evidence="3">
    <location>
        <begin position="236"/>
        <end position="260"/>
    </location>
</feature>
<feature type="topological domain" description="Extracellular" evidence="3">
    <location>
        <begin position="261"/>
        <end position="277"/>
    </location>
</feature>
<feature type="transmembrane region" description="Helical; Name=7" evidence="3">
    <location>
        <begin position="278"/>
        <end position="301"/>
    </location>
</feature>
<feature type="topological domain" description="Cytoplasmic" evidence="3">
    <location>
        <begin position="302"/>
        <end position="352"/>
    </location>
</feature>
<feature type="modified residue" description="Sulfotyrosine" evidence="1">
    <location>
        <position position="3"/>
    </location>
</feature>
<feature type="modified residue" description="Sulfotyrosine" evidence="3">
    <location>
        <position position="10"/>
    </location>
</feature>
<feature type="modified residue" description="Sulfotyrosine" evidence="3">
    <location>
        <position position="14"/>
    </location>
</feature>
<feature type="modified residue" description="Phosphoserine; by BARK1" evidence="1">
    <location>
        <position position="337"/>
    </location>
</feature>
<feature type="modified residue" description="Phosphoserine; by BARK1" evidence="1">
    <location>
        <position position="342"/>
    </location>
</feature>
<feature type="modified residue" description="Phosphoserine; by BARK1" evidence="1">
    <location>
        <position position="349"/>
    </location>
</feature>
<feature type="lipid moiety-binding region" description="S-palmitoyl cysteine" evidence="1">
    <location>
        <position position="321"/>
    </location>
</feature>
<feature type="lipid moiety-binding region" description="S-palmitoyl cysteine" evidence="1">
    <location>
        <position position="323"/>
    </location>
</feature>
<feature type="lipid moiety-binding region" description="S-palmitoyl cysteine" evidence="1">
    <location>
        <position position="324"/>
    </location>
</feature>
<feature type="glycosylation site" description="O-linked (GalNAc...) serine" evidence="1">
    <location>
        <position position="6"/>
    </location>
</feature>
<feature type="glycosylation site" description="O-linked (GalNAc...) serine" evidence="1">
    <location>
        <position position="7"/>
    </location>
</feature>
<feature type="disulfide bond" evidence="1">
    <location>
        <begin position="20"/>
        <end position="269"/>
    </location>
</feature>
<feature type="disulfide bond" evidence="4">
    <location>
        <begin position="101"/>
        <end position="178"/>
    </location>
</feature>
<name>CCR5_PLEMO</name>
<dbReference type="EMBL" id="AF177887">
    <property type="protein sequence ID" value="AAK43370.1"/>
    <property type="molecule type" value="Genomic_DNA"/>
</dbReference>
<dbReference type="SMR" id="Q95NC2"/>
<dbReference type="GlyCosmos" id="Q95NC2">
    <property type="glycosylation" value="2 sites, No reported glycans"/>
</dbReference>
<dbReference type="GO" id="GO:0005737">
    <property type="term" value="C:cytoplasm"/>
    <property type="evidence" value="ECO:0007669"/>
    <property type="project" value="TreeGrafter"/>
</dbReference>
<dbReference type="GO" id="GO:0009897">
    <property type="term" value="C:external side of plasma membrane"/>
    <property type="evidence" value="ECO:0000250"/>
    <property type="project" value="UniProtKB"/>
</dbReference>
<dbReference type="GO" id="GO:0016493">
    <property type="term" value="F:C-C chemokine receptor activity"/>
    <property type="evidence" value="ECO:0000250"/>
    <property type="project" value="UniProtKB"/>
</dbReference>
<dbReference type="GO" id="GO:0071791">
    <property type="term" value="F:chemokine (C-C motif) ligand 5 binding"/>
    <property type="evidence" value="ECO:0007669"/>
    <property type="project" value="TreeGrafter"/>
</dbReference>
<dbReference type="GO" id="GO:0019722">
    <property type="term" value="P:calcium-mediated signaling"/>
    <property type="evidence" value="ECO:0007669"/>
    <property type="project" value="TreeGrafter"/>
</dbReference>
<dbReference type="GO" id="GO:0060326">
    <property type="term" value="P:cell chemotaxis"/>
    <property type="evidence" value="ECO:0007669"/>
    <property type="project" value="TreeGrafter"/>
</dbReference>
<dbReference type="GO" id="GO:0006955">
    <property type="term" value="P:immune response"/>
    <property type="evidence" value="ECO:0007669"/>
    <property type="project" value="InterPro"/>
</dbReference>
<dbReference type="GO" id="GO:0006954">
    <property type="term" value="P:inflammatory response"/>
    <property type="evidence" value="ECO:0007669"/>
    <property type="project" value="InterPro"/>
</dbReference>
<dbReference type="GO" id="GO:0007204">
    <property type="term" value="P:positive regulation of cytosolic calcium ion concentration"/>
    <property type="evidence" value="ECO:0007669"/>
    <property type="project" value="TreeGrafter"/>
</dbReference>
<dbReference type="CDD" id="cd15184">
    <property type="entry name" value="7tmA_CCR5_CCR2"/>
    <property type="match status" value="1"/>
</dbReference>
<dbReference type="FunFam" id="1.20.1070.10:FF:000026">
    <property type="entry name" value="C-C chemokine receptor type 5"/>
    <property type="match status" value="1"/>
</dbReference>
<dbReference type="Gene3D" id="1.20.1070.10">
    <property type="entry name" value="Rhodopsin 7-helix transmembrane proteins"/>
    <property type="match status" value="1"/>
</dbReference>
<dbReference type="InterPro" id="IPR050119">
    <property type="entry name" value="CCR1-9-like"/>
</dbReference>
<dbReference type="InterPro" id="IPR002240">
    <property type="entry name" value="Chemokine_CCR5"/>
</dbReference>
<dbReference type="InterPro" id="IPR000355">
    <property type="entry name" value="Chemokine_rcpt"/>
</dbReference>
<dbReference type="InterPro" id="IPR000276">
    <property type="entry name" value="GPCR_Rhodpsn"/>
</dbReference>
<dbReference type="InterPro" id="IPR017452">
    <property type="entry name" value="GPCR_Rhodpsn_7TM"/>
</dbReference>
<dbReference type="PANTHER" id="PTHR10489:SF686">
    <property type="entry name" value="C-C CHEMOKINE RECEPTOR TYPE 5"/>
    <property type="match status" value="1"/>
</dbReference>
<dbReference type="PANTHER" id="PTHR10489">
    <property type="entry name" value="CELL ADHESION MOLECULE"/>
    <property type="match status" value="1"/>
</dbReference>
<dbReference type="Pfam" id="PF00001">
    <property type="entry name" value="7tm_1"/>
    <property type="match status" value="1"/>
</dbReference>
<dbReference type="PRINTS" id="PR00657">
    <property type="entry name" value="CCCHEMOKINER"/>
</dbReference>
<dbReference type="PRINTS" id="PR01110">
    <property type="entry name" value="CHEMOKINER5"/>
</dbReference>
<dbReference type="PRINTS" id="PR00237">
    <property type="entry name" value="GPCRRHODOPSN"/>
</dbReference>
<dbReference type="SMART" id="SM01381">
    <property type="entry name" value="7TM_GPCR_Srsx"/>
    <property type="match status" value="1"/>
</dbReference>
<dbReference type="SUPFAM" id="SSF81321">
    <property type="entry name" value="Family A G protein-coupled receptor-like"/>
    <property type="match status" value="1"/>
</dbReference>
<dbReference type="PROSITE" id="PS00237">
    <property type="entry name" value="G_PROTEIN_RECEP_F1_1"/>
    <property type="match status" value="1"/>
</dbReference>
<dbReference type="PROSITE" id="PS50262">
    <property type="entry name" value="G_PROTEIN_RECEP_F1_2"/>
    <property type="match status" value="1"/>
</dbReference>
<organism>
    <name type="scientific">Plecturocebus moloch</name>
    <name type="common">Dusky titi monkey</name>
    <name type="synonym">Callicebus moloch</name>
    <dbReference type="NCBI Taxonomy" id="9523"/>
    <lineage>
        <taxon>Eukaryota</taxon>
        <taxon>Metazoa</taxon>
        <taxon>Chordata</taxon>
        <taxon>Craniata</taxon>
        <taxon>Vertebrata</taxon>
        <taxon>Euteleostomi</taxon>
        <taxon>Mammalia</taxon>
        <taxon>Eutheria</taxon>
        <taxon>Euarchontoglires</taxon>
        <taxon>Primates</taxon>
        <taxon>Haplorrhini</taxon>
        <taxon>Platyrrhini</taxon>
        <taxon>Pitheciidae</taxon>
        <taxon>Callicebinae</taxon>
        <taxon>Plecturocebus</taxon>
    </lineage>
</organism>
<gene>
    <name type="primary">CCR5</name>
    <name type="synonym">CMKBR5</name>
</gene>